<comment type="function">
    <text evidence="1">Catalyzes the methylthiolation of N6-(dimethylallyl)adenosine (i(6)A), leading to the formation of 2-methylthio-N6-(dimethylallyl)adenosine (ms(2)i(6)A) at position 37 in tRNAs that read codons beginning with uridine.</text>
</comment>
<comment type="catalytic activity">
    <reaction evidence="1">
        <text>N(6)-dimethylallyladenosine(37) in tRNA + (sulfur carrier)-SH + AH2 + 2 S-adenosyl-L-methionine = 2-methylsulfanyl-N(6)-dimethylallyladenosine(37) in tRNA + (sulfur carrier)-H + 5'-deoxyadenosine + L-methionine + A + S-adenosyl-L-homocysteine + 2 H(+)</text>
        <dbReference type="Rhea" id="RHEA:37067"/>
        <dbReference type="Rhea" id="RHEA-COMP:10375"/>
        <dbReference type="Rhea" id="RHEA-COMP:10376"/>
        <dbReference type="Rhea" id="RHEA-COMP:14737"/>
        <dbReference type="Rhea" id="RHEA-COMP:14739"/>
        <dbReference type="ChEBI" id="CHEBI:13193"/>
        <dbReference type="ChEBI" id="CHEBI:15378"/>
        <dbReference type="ChEBI" id="CHEBI:17319"/>
        <dbReference type="ChEBI" id="CHEBI:17499"/>
        <dbReference type="ChEBI" id="CHEBI:29917"/>
        <dbReference type="ChEBI" id="CHEBI:57844"/>
        <dbReference type="ChEBI" id="CHEBI:57856"/>
        <dbReference type="ChEBI" id="CHEBI:59789"/>
        <dbReference type="ChEBI" id="CHEBI:64428"/>
        <dbReference type="ChEBI" id="CHEBI:74415"/>
        <dbReference type="ChEBI" id="CHEBI:74417"/>
        <dbReference type="EC" id="2.8.4.3"/>
    </reaction>
</comment>
<comment type="cofactor">
    <cofactor evidence="1">
        <name>[4Fe-4S] cluster</name>
        <dbReference type="ChEBI" id="CHEBI:49883"/>
    </cofactor>
    <text evidence="1">Binds 2 [4Fe-4S] clusters. One cluster is coordinated with 3 cysteines and an exchangeable S-adenosyl-L-methionine.</text>
</comment>
<comment type="subunit">
    <text evidence="1">Monomer.</text>
</comment>
<comment type="subcellular location">
    <subcellularLocation>
        <location evidence="1">Cytoplasm</location>
    </subcellularLocation>
</comment>
<comment type="similarity">
    <text evidence="1">Belongs to the methylthiotransferase family. MiaB subfamily.</text>
</comment>
<keyword id="KW-0004">4Fe-4S</keyword>
<keyword id="KW-0963">Cytoplasm</keyword>
<keyword id="KW-0408">Iron</keyword>
<keyword id="KW-0411">Iron-sulfur</keyword>
<keyword id="KW-0479">Metal-binding</keyword>
<keyword id="KW-0949">S-adenosyl-L-methionine</keyword>
<keyword id="KW-0808">Transferase</keyword>
<keyword id="KW-0819">tRNA processing</keyword>
<proteinExistence type="inferred from homology"/>
<reference key="1">
    <citation type="journal article" date="2006" name="Science">
        <title>Genomic islands and the ecology and evolution of Prochlorococcus.</title>
        <authorList>
            <person name="Coleman M.L."/>
            <person name="Sullivan M.B."/>
            <person name="Martiny A.C."/>
            <person name="Steglich C."/>
            <person name="Barry K."/>
            <person name="Delong E.F."/>
            <person name="Chisholm S.W."/>
        </authorList>
    </citation>
    <scope>NUCLEOTIDE SEQUENCE [LARGE SCALE GENOMIC DNA]</scope>
    <source>
        <strain>MIT 9312</strain>
    </source>
</reference>
<protein>
    <recommendedName>
        <fullName evidence="1">tRNA-2-methylthio-N(6)-dimethylallyladenosine synthase</fullName>
        <ecNumber evidence="1">2.8.4.3</ecNumber>
    </recommendedName>
    <alternativeName>
        <fullName evidence="1">(Dimethylallyl)adenosine tRNA methylthiotransferase MiaB</fullName>
    </alternativeName>
    <alternativeName>
        <fullName evidence="1">tRNA-i(6)A37 methylthiotransferase</fullName>
    </alternativeName>
</protein>
<gene>
    <name evidence="1" type="primary">miaB</name>
    <name type="ordered locus">PMT9312_1401</name>
</gene>
<name>MIAB_PROM9</name>
<feature type="chain" id="PRO_0000374449" description="tRNA-2-methylthio-N(6)-dimethylallyladenosine synthase">
    <location>
        <begin position="1"/>
        <end position="463"/>
    </location>
</feature>
<feature type="domain" description="MTTase N-terminal" evidence="1">
    <location>
        <begin position="19"/>
        <end position="135"/>
    </location>
</feature>
<feature type="domain" description="Radical SAM core" evidence="2">
    <location>
        <begin position="156"/>
        <end position="393"/>
    </location>
</feature>
<feature type="domain" description="TRAM" evidence="1">
    <location>
        <begin position="396"/>
        <end position="463"/>
    </location>
</feature>
<feature type="binding site" evidence="1">
    <location>
        <position position="28"/>
    </location>
    <ligand>
        <name>[4Fe-4S] cluster</name>
        <dbReference type="ChEBI" id="CHEBI:49883"/>
        <label>1</label>
    </ligand>
</feature>
<feature type="binding site" evidence="1">
    <location>
        <position position="64"/>
    </location>
    <ligand>
        <name>[4Fe-4S] cluster</name>
        <dbReference type="ChEBI" id="CHEBI:49883"/>
        <label>1</label>
    </ligand>
</feature>
<feature type="binding site" evidence="1">
    <location>
        <position position="98"/>
    </location>
    <ligand>
        <name>[4Fe-4S] cluster</name>
        <dbReference type="ChEBI" id="CHEBI:49883"/>
        <label>1</label>
    </ligand>
</feature>
<feature type="binding site" evidence="1">
    <location>
        <position position="170"/>
    </location>
    <ligand>
        <name>[4Fe-4S] cluster</name>
        <dbReference type="ChEBI" id="CHEBI:49883"/>
        <label>2</label>
        <note>4Fe-4S-S-AdoMet</note>
    </ligand>
</feature>
<feature type="binding site" evidence="1">
    <location>
        <position position="174"/>
    </location>
    <ligand>
        <name>[4Fe-4S] cluster</name>
        <dbReference type="ChEBI" id="CHEBI:49883"/>
        <label>2</label>
        <note>4Fe-4S-S-AdoMet</note>
    </ligand>
</feature>
<feature type="binding site" evidence="1">
    <location>
        <position position="177"/>
    </location>
    <ligand>
        <name>[4Fe-4S] cluster</name>
        <dbReference type="ChEBI" id="CHEBI:49883"/>
        <label>2</label>
        <note>4Fe-4S-S-AdoMet</note>
    </ligand>
</feature>
<evidence type="ECO:0000255" key="1">
    <source>
        <dbReference type="HAMAP-Rule" id="MF_01864"/>
    </source>
</evidence>
<evidence type="ECO:0000255" key="2">
    <source>
        <dbReference type="PROSITE-ProRule" id="PRU01266"/>
    </source>
</evidence>
<organism>
    <name type="scientific">Prochlorococcus marinus (strain MIT 9312)</name>
    <dbReference type="NCBI Taxonomy" id="74546"/>
    <lineage>
        <taxon>Bacteria</taxon>
        <taxon>Bacillati</taxon>
        <taxon>Cyanobacteriota</taxon>
        <taxon>Cyanophyceae</taxon>
        <taxon>Synechococcales</taxon>
        <taxon>Prochlorococcaceae</taxon>
        <taxon>Prochlorococcus</taxon>
    </lineage>
</organism>
<accession>Q319I4</accession>
<sequence>MLTKTKKEEKEFQKDSTTRSYWITTFGCQMNKADSERMAGTLEKMGYTRADDELNADLVLYNTCTIRDNAEHKVYSFLGRQAKRKHKIPSLKLVVAGCLAQQEGESLLRRVPELDLVMGPQHVNNLENLLGKVDLGNQVAATEETFISEDITNARRESSICGWVNIIYGCNERCSYCVVPSVRGKEQSRYPNAIKSEIQKLADDNFKEITLLGQNIDAYGRDLPGTTKEGRKENTLTDLLYYIHDINGISRIRFATSHPRYFSKRLIQACYELDKVCEHFHIPFQSGNDEILKQMSRGYNIKKYKNIIDNIRSLMPDASITADAIVAFPGETEQQYQDTLKLISDIGFDQVNTAAYSPRPNTPAAVWSNQLSEEVKKTRLQEINALVEKTARNRNQRYINNIESVLIEGLNPKNSSQIMGRTRTNRLTFVKIPKNIQFNFSLGDEIDVRINEARPFSLTGELC</sequence>
<dbReference type="EC" id="2.8.4.3" evidence="1"/>
<dbReference type="EMBL" id="CP000111">
    <property type="protein sequence ID" value="ABB50461.1"/>
    <property type="molecule type" value="Genomic_DNA"/>
</dbReference>
<dbReference type="RefSeq" id="WP_011376947.1">
    <property type="nucleotide sequence ID" value="NC_007577.1"/>
</dbReference>
<dbReference type="SMR" id="Q319I4"/>
<dbReference type="STRING" id="74546.PMT9312_1401"/>
<dbReference type="KEGG" id="pmi:PMT9312_1401"/>
<dbReference type="eggNOG" id="COG0621">
    <property type="taxonomic scope" value="Bacteria"/>
</dbReference>
<dbReference type="HOGENOM" id="CLU_018697_2_2_3"/>
<dbReference type="OrthoDB" id="9805215at2"/>
<dbReference type="Proteomes" id="UP000002715">
    <property type="component" value="Chromosome"/>
</dbReference>
<dbReference type="GO" id="GO:0005737">
    <property type="term" value="C:cytoplasm"/>
    <property type="evidence" value="ECO:0007669"/>
    <property type="project" value="UniProtKB-SubCell"/>
</dbReference>
<dbReference type="GO" id="GO:0051539">
    <property type="term" value="F:4 iron, 4 sulfur cluster binding"/>
    <property type="evidence" value="ECO:0007669"/>
    <property type="project" value="UniProtKB-UniRule"/>
</dbReference>
<dbReference type="GO" id="GO:0046872">
    <property type="term" value="F:metal ion binding"/>
    <property type="evidence" value="ECO:0007669"/>
    <property type="project" value="UniProtKB-KW"/>
</dbReference>
<dbReference type="GO" id="GO:0035596">
    <property type="term" value="F:methylthiotransferase activity"/>
    <property type="evidence" value="ECO:0007669"/>
    <property type="project" value="InterPro"/>
</dbReference>
<dbReference type="GO" id="GO:0035600">
    <property type="term" value="P:tRNA methylthiolation"/>
    <property type="evidence" value="ECO:0007669"/>
    <property type="project" value="TreeGrafter"/>
</dbReference>
<dbReference type="CDD" id="cd01335">
    <property type="entry name" value="Radical_SAM"/>
    <property type="match status" value="1"/>
</dbReference>
<dbReference type="FunFam" id="3.40.50.12160:FF:000003">
    <property type="entry name" value="CDK5 regulatory subunit-associated protein 1"/>
    <property type="match status" value="1"/>
</dbReference>
<dbReference type="FunFam" id="3.80.30.20:FF:000001">
    <property type="entry name" value="tRNA-2-methylthio-N(6)-dimethylallyladenosine synthase 2"/>
    <property type="match status" value="1"/>
</dbReference>
<dbReference type="Gene3D" id="3.40.50.12160">
    <property type="entry name" value="Methylthiotransferase, N-terminal domain"/>
    <property type="match status" value="1"/>
</dbReference>
<dbReference type="Gene3D" id="3.80.30.20">
    <property type="entry name" value="tm_1862 like domain"/>
    <property type="match status" value="1"/>
</dbReference>
<dbReference type="HAMAP" id="MF_01864">
    <property type="entry name" value="tRNA_metthiotr_MiaB"/>
    <property type="match status" value="1"/>
</dbReference>
<dbReference type="InterPro" id="IPR006638">
    <property type="entry name" value="Elp3/MiaA/NifB-like_rSAM"/>
</dbReference>
<dbReference type="InterPro" id="IPR005839">
    <property type="entry name" value="Methylthiotransferase"/>
</dbReference>
<dbReference type="InterPro" id="IPR020612">
    <property type="entry name" value="Methylthiotransferase_CS"/>
</dbReference>
<dbReference type="InterPro" id="IPR013848">
    <property type="entry name" value="Methylthiotransferase_N"/>
</dbReference>
<dbReference type="InterPro" id="IPR038135">
    <property type="entry name" value="Methylthiotransferase_N_sf"/>
</dbReference>
<dbReference type="InterPro" id="IPR006463">
    <property type="entry name" value="MiaB_methiolase"/>
</dbReference>
<dbReference type="InterPro" id="IPR007197">
    <property type="entry name" value="rSAM"/>
</dbReference>
<dbReference type="InterPro" id="IPR023404">
    <property type="entry name" value="rSAM_horseshoe"/>
</dbReference>
<dbReference type="InterPro" id="IPR002792">
    <property type="entry name" value="TRAM_dom"/>
</dbReference>
<dbReference type="NCBIfam" id="TIGR01574">
    <property type="entry name" value="miaB-methiolase"/>
    <property type="match status" value="1"/>
</dbReference>
<dbReference type="NCBIfam" id="TIGR00089">
    <property type="entry name" value="MiaB/RimO family radical SAM methylthiotransferase"/>
    <property type="match status" value="1"/>
</dbReference>
<dbReference type="PANTHER" id="PTHR43020">
    <property type="entry name" value="CDK5 REGULATORY SUBUNIT-ASSOCIATED PROTEIN 1"/>
    <property type="match status" value="1"/>
</dbReference>
<dbReference type="PANTHER" id="PTHR43020:SF2">
    <property type="entry name" value="MITOCHONDRIAL TRNA METHYLTHIOTRANSFERASE CDK5RAP1"/>
    <property type="match status" value="1"/>
</dbReference>
<dbReference type="Pfam" id="PF04055">
    <property type="entry name" value="Radical_SAM"/>
    <property type="match status" value="1"/>
</dbReference>
<dbReference type="Pfam" id="PF01938">
    <property type="entry name" value="TRAM"/>
    <property type="match status" value="1"/>
</dbReference>
<dbReference type="Pfam" id="PF00919">
    <property type="entry name" value="UPF0004"/>
    <property type="match status" value="1"/>
</dbReference>
<dbReference type="SFLD" id="SFLDF00273">
    <property type="entry name" value="(dimethylallyl)adenosine_tRNA"/>
    <property type="match status" value="1"/>
</dbReference>
<dbReference type="SFLD" id="SFLDG01082">
    <property type="entry name" value="B12-binding_domain_containing"/>
    <property type="match status" value="1"/>
</dbReference>
<dbReference type="SFLD" id="SFLDS00029">
    <property type="entry name" value="Radical_SAM"/>
    <property type="match status" value="1"/>
</dbReference>
<dbReference type="SMART" id="SM00729">
    <property type="entry name" value="Elp3"/>
    <property type="match status" value="1"/>
</dbReference>
<dbReference type="SUPFAM" id="SSF102114">
    <property type="entry name" value="Radical SAM enzymes"/>
    <property type="match status" value="1"/>
</dbReference>
<dbReference type="PROSITE" id="PS51449">
    <property type="entry name" value="MTTASE_N"/>
    <property type="match status" value="1"/>
</dbReference>
<dbReference type="PROSITE" id="PS01278">
    <property type="entry name" value="MTTASE_RADICAL"/>
    <property type="match status" value="1"/>
</dbReference>
<dbReference type="PROSITE" id="PS51918">
    <property type="entry name" value="RADICAL_SAM"/>
    <property type="match status" value="1"/>
</dbReference>
<dbReference type="PROSITE" id="PS50926">
    <property type="entry name" value="TRAM"/>
    <property type="match status" value="1"/>
</dbReference>